<gene>
    <name evidence="1" type="primary">mnmG</name>
    <name evidence="1" type="synonym">gidA</name>
    <name type="ordered locus">pc1839</name>
</gene>
<name>MNMG_PARUW</name>
<comment type="function">
    <text evidence="1">NAD-binding protein involved in the addition of a carboxymethylaminomethyl (cmnm) group at the wobble position (U34) of certain tRNAs, forming tRNA-cmnm(5)s(2)U34.</text>
</comment>
<comment type="cofactor">
    <cofactor evidence="1">
        <name>FAD</name>
        <dbReference type="ChEBI" id="CHEBI:57692"/>
    </cofactor>
</comment>
<comment type="subunit">
    <text evidence="1">Homodimer. Heterotetramer of two MnmE and two MnmG subunits.</text>
</comment>
<comment type="subcellular location">
    <subcellularLocation>
        <location evidence="1">Cytoplasm</location>
    </subcellularLocation>
</comment>
<comment type="similarity">
    <text evidence="1">Belongs to the MnmG family.</text>
</comment>
<organism>
    <name type="scientific">Protochlamydia amoebophila (strain UWE25)</name>
    <dbReference type="NCBI Taxonomy" id="264201"/>
    <lineage>
        <taxon>Bacteria</taxon>
        <taxon>Pseudomonadati</taxon>
        <taxon>Chlamydiota</taxon>
        <taxon>Chlamydiia</taxon>
        <taxon>Parachlamydiales</taxon>
        <taxon>Parachlamydiaceae</taxon>
        <taxon>Candidatus Protochlamydia</taxon>
    </lineage>
</organism>
<sequence>MMLWKFPVRYDVIVIGGGHAGCEAALASARMGLRTLLLTMNLDTIAKMSCNPAVGGIAKGHIVREIDALGGEMGKVIDVTGIQYRMLNATKGPAVWAPRAQADKLAYQSEMKHRMERVSNLDIKQGTIEDLLIENDHICGVITKEGISYDCQAIVLSSGTFLRGLLHIGETNYSGGRAGDQPSVGMSASLEKYGLKLGRLKTGTPPRINKRSIDFSCTEEQPGDPGVKFSYDNEGIPRLPQVSCYITYTTEETKQIILSNIHRSPMYSGKIKGVGPRYCPSIEDKVVRFSDKERHQIFLEPEGLQTQEVYVNGVSSSLPFDVQLAFIKSIPALRHAEIMRPAYAIEYDYVISGQIDFSLECKKIGGLFLAGQINGTSGYEEAAGQGLMAGINAANKVMGKAPLILKRSEAYIGVMIDDLVTKGLDEPYRMFTSRAEHRLLLRQDNADLRLRRYGYEVGLVDQTRYDRVKEKQRIMEEESERLAKTFKQVSNKGYTLTQLLCRPENTYASLLKEYPDVMQNFGEEINFQIELNLKYAGYIDRQTSEVAKLAHVEKIQIPIGFDFSTVNGLRNEAKQKLNQIAPRHLGQALRISGVSPADISILMIALTRYQEPIEKERLTSDCSEA</sequence>
<accession>Q6MA36</accession>
<feature type="chain" id="PRO_0000117145" description="tRNA uridine 5-carboxymethylaminomethyl modification enzyme MnmG">
    <location>
        <begin position="1"/>
        <end position="625"/>
    </location>
</feature>
<feature type="binding site" evidence="1">
    <location>
        <begin position="16"/>
        <end position="21"/>
    </location>
    <ligand>
        <name>FAD</name>
        <dbReference type="ChEBI" id="CHEBI:57692"/>
    </ligand>
</feature>
<feature type="binding site" evidence="1">
    <location>
        <position position="128"/>
    </location>
    <ligand>
        <name>FAD</name>
        <dbReference type="ChEBI" id="CHEBI:57692"/>
    </ligand>
</feature>
<feature type="binding site" evidence="1">
    <location>
        <position position="183"/>
    </location>
    <ligand>
        <name>FAD</name>
        <dbReference type="ChEBI" id="CHEBI:57692"/>
    </ligand>
</feature>
<feature type="binding site" evidence="1">
    <location>
        <begin position="275"/>
        <end position="289"/>
    </location>
    <ligand>
        <name>NAD(+)</name>
        <dbReference type="ChEBI" id="CHEBI:57540"/>
    </ligand>
</feature>
<feature type="binding site" evidence="1">
    <location>
        <position position="372"/>
    </location>
    <ligand>
        <name>FAD</name>
        <dbReference type="ChEBI" id="CHEBI:57692"/>
    </ligand>
</feature>
<keyword id="KW-0963">Cytoplasm</keyword>
<keyword id="KW-0274">FAD</keyword>
<keyword id="KW-0285">Flavoprotein</keyword>
<keyword id="KW-0520">NAD</keyword>
<keyword id="KW-1185">Reference proteome</keyword>
<keyword id="KW-0819">tRNA processing</keyword>
<reference key="1">
    <citation type="journal article" date="2004" name="Science">
        <title>Illuminating the evolutionary history of chlamydiae.</title>
        <authorList>
            <person name="Horn M."/>
            <person name="Collingro A."/>
            <person name="Schmitz-Esser S."/>
            <person name="Beier C.L."/>
            <person name="Purkhold U."/>
            <person name="Fartmann B."/>
            <person name="Brandt P."/>
            <person name="Nyakatura G.J."/>
            <person name="Droege M."/>
            <person name="Frishman D."/>
            <person name="Rattei T."/>
            <person name="Mewes H.-W."/>
            <person name="Wagner M."/>
        </authorList>
    </citation>
    <scope>NUCLEOTIDE SEQUENCE [LARGE SCALE GENOMIC DNA]</scope>
    <source>
        <strain>UWE25</strain>
    </source>
</reference>
<evidence type="ECO:0000255" key="1">
    <source>
        <dbReference type="HAMAP-Rule" id="MF_00129"/>
    </source>
</evidence>
<protein>
    <recommendedName>
        <fullName evidence="1">tRNA uridine 5-carboxymethylaminomethyl modification enzyme MnmG</fullName>
    </recommendedName>
    <alternativeName>
        <fullName evidence="1">Glucose-inhibited division protein A</fullName>
    </alternativeName>
</protein>
<dbReference type="EMBL" id="BX908798">
    <property type="protein sequence ID" value="CAF24563.1"/>
    <property type="molecule type" value="Genomic_DNA"/>
</dbReference>
<dbReference type="RefSeq" id="WP_011176384.1">
    <property type="nucleotide sequence ID" value="NC_005861.2"/>
</dbReference>
<dbReference type="SMR" id="Q6MA36"/>
<dbReference type="STRING" id="264201.pc1839"/>
<dbReference type="KEGG" id="pcu:PC_RS08820"/>
<dbReference type="eggNOG" id="COG0445">
    <property type="taxonomic scope" value="Bacteria"/>
</dbReference>
<dbReference type="HOGENOM" id="CLU_007831_2_2_0"/>
<dbReference type="OrthoDB" id="9815560at2"/>
<dbReference type="Proteomes" id="UP000000529">
    <property type="component" value="Chromosome"/>
</dbReference>
<dbReference type="GO" id="GO:0005829">
    <property type="term" value="C:cytosol"/>
    <property type="evidence" value="ECO:0007669"/>
    <property type="project" value="TreeGrafter"/>
</dbReference>
<dbReference type="GO" id="GO:0050660">
    <property type="term" value="F:flavin adenine dinucleotide binding"/>
    <property type="evidence" value="ECO:0007669"/>
    <property type="project" value="UniProtKB-UniRule"/>
</dbReference>
<dbReference type="GO" id="GO:0030488">
    <property type="term" value="P:tRNA methylation"/>
    <property type="evidence" value="ECO:0007669"/>
    <property type="project" value="TreeGrafter"/>
</dbReference>
<dbReference type="GO" id="GO:0002098">
    <property type="term" value="P:tRNA wobble uridine modification"/>
    <property type="evidence" value="ECO:0007669"/>
    <property type="project" value="InterPro"/>
</dbReference>
<dbReference type="FunFam" id="1.10.150.570:FF:000001">
    <property type="entry name" value="tRNA uridine 5-carboxymethylaminomethyl modification enzyme MnmG"/>
    <property type="match status" value="1"/>
</dbReference>
<dbReference type="FunFam" id="3.50.50.60:FF:000002">
    <property type="entry name" value="tRNA uridine 5-carboxymethylaminomethyl modification enzyme MnmG"/>
    <property type="match status" value="1"/>
</dbReference>
<dbReference type="FunFam" id="3.50.50.60:FF:000010">
    <property type="entry name" value="tRNA uridine 5-carboxymethylaminomethyl modification enzyme MnmG"/>
    <property type="match status" value="1"/>
</dbReference>
<dbReference type="Gene3D" id="3.50.50.60">
    <property type="entry name" value="FAD/NAD(P)-binding domain"/>
    <property type="match status" value="2"/>
</dbReference>
<dbReference type="Gene3D" id="1.10.150.570">
    <property type="entry name" value="GidA associated domain, C-terminal subdomain"/>
    <property type="match status" value="1"/>
</dbReference>
<dbReference type="Gene3D" id="1.10.10.1800">
    <property type="entry name" value="tRNA uridine 5-carboxymethylaminomethyl modification enzyme MnmG/GidA"/>
    <property type="match status" value="1"/>
</dbReference>
<dbReference type="HAMAP" id="MF_00129">
    <property type="entry name" value="MnmG_GidA"/>
    <property type="match status" value="1"/>
</dbReference>
<dbReference type="InterPro" id="IPR036188">
    <property type="entry name" value="FAD/NAD-bd_sf"/>
</dbReference>
<dbReference type="InterPro" id="IPR049312">
    <property type="entry name" value="GIDA_C_N"/>
</dbReference>
<dbReference type="InterPro" id="IPR004416">
    <property type="entry name" value="MnmG"/>
</dbReference>
<dbReference type="InterPro" id="IPR002218">
    <property type="entry name" value="MnmG-rel"/>
</dbReference>
<dbReference type="InterPro" id="IPR020595">
    <property type="entry name" value="MnmG-rel_CS"/>
</dbReference>
<dbReference type="InterPro" id="IPR026904">
    <property type="entry name" value="MnmG_C"/>
</dbReference>
<dbReference type="InterPro" id="IPR047001">
    <property type="entry name" value="MnmG_C_subdom"/>
</dbReference>
<dbReference type="InterPro" id="IPR044920">
    <property type="entry name" value="MnmG_C_subdom_sf"/>
</dbReference>
<dbReference type="InterPro" id="IPR040131">
    <property type="entry name" value="MnmG_N"/>
</dbReference>
<dbReference type="NCBIfam" id="TIGR00136">
    <property type="entry name" value="mnmG_gidA"/>
    <property type="match status" value="1"/>
</dbReference>
<dbReference type="PANTHER" id="PTHR11806">
    <property type="entry name" value="GLUCOSE INHIBITED DIVISION PROTEIN A"/>
    <property type="match status" value="1"/>
</dbReference>
<dbReference type="PANTHER" id="PTHR11806:SF0">
    <property type="entry name" value="PROTEIN MTO1 HOMOLOG, MITOCHONDRIAL"/>
    <property type="match status" value="1"/>
</dbReference>
<dbReference type="Pfam" id="PF01134">
    <property type="entry name" value="GIDA"/>
    <property type="match status" value="1"/>
</dbReference>
<dbReference type="Pfam" id="PF21680">
    <property type="entry name" value="GIDA_C_1st"/>
    <property type="match status" value="1"/>
</dbReference>
<dbReference type="Pfam" id="PF13932">
    <property type="entry name" value="SAM_GIDA_C"/>
    <property type="match status" value="1"/>
</dbReference>
<dbReference type="SMART" id="SM01228">
    <property type="entry name" value="GIDA_assoc_3"/>
    <property type="match status" value="1"/>
</dbReference>
<dbReference type="SUPFAM" id="SSF51905">
    <property type="entry name" value="FAD/NAD(P)-binding domain"/>
    <property type="match status" value="1"/>
</dbReference>
<dbReference type="PROSITE" id="PS01280">
    <property type="entry name" value="GIDA_1"/>
    <property type="match status" value="1"/>
</dbReference>
<dbReference type="PROSITE" id="PS01281">
    <property type="entry name" value="GIDA_2"/>
    <property type="match status" value="1"/>
</dbReference>
<proteinExistence type="inferred from homology"/>